<accession>Q8YFR1</accession>
<sequence>MTQHRPPLEIRLCGPRGFCAGVDRAIQIVVLALKKYGAPVYVRHEIVHNRYVVEGLQARGAIFVEELDEIPAAHRNQPVVFSAHGVPKSVPADAEAKNLFYLDATCPLVSKVHKQAMRHQRLGRHVILIGHSGHPEVIGTMGQLPDGAVTLIETVEDAHTCHFDDEDNLGFVTQTTLSVDDTAGIIKELQARFPNLAAPAAESICYATTNRQDAVRAAAPGCDLFLIVGAPNSSNSKRLVEVAEKAGARMSMLVQRAEDIEWEQIGDISVVGLSAGASAPEIIVDEIIDAFKARFDVKIELAETTVETENFLVNREIRDVELTVKDMAFVNGEHRVVGISKLMQGK</sequence>
<proteinExistence type="inferred from homology"/>
<evidence type="ECO:0000255" key="1">
    <source>
        <dbReference type="HAMAP-Rule" id="MF_00191"/>
    </source>
</evidence>
<comment type="function">
    <text evidence="1">Catalyzes the conversion of 1-hydroxy-2-methyl-2-(E)-butenyl 4-diphosphate (HMBPP) into a mixture of isopentenyl diphosphate (IPP) and dimethylallyl diphosphate (DMAPP). Acts in the terminal step of the DOXP/MEP pathway for isoprenoid precursor biosynthesis.</text>
</comment>
<comment type="catalytic activity">
    <reaction evidence="1">
        <text>isopentenyl diphosphate + 2 oxidized [2Fe-2S]-[ferredoxin] + H2O = (2E)-4-hydroxy-3-methylbut-2-enyl diphosphate + 2 reduced [2Fe-2S]-[ferredoxin] + 2 H(+)</text>
        <dbReference type="Rhea" id="RHEA:24488"/>
        <dbReference type="Rhea" id="RHEA-COMP:10000"/>
        <dbReference type="Rhea" id="RHEA-COMP:10001"/>
        <dbReference type="ChEBI" id="CHEBI:15377"/>
        <dbReference type="ChEBI" id="CHEBI:15378"/>
        <dbReference type="ChEBI" id="CHEBI:33737"/>
        <dbReference type="ChEBI" id="CHEBI:33738"/>
        <dbReference type="ChEBI" id="CHEBI:128753"/>
        <dbReference type="ChEBI" id="CHEBI:128769"/>
        <dbReference type="EC" id="1.17.7.4"/>
    </reaction>
</comment>
<comment type="catalytic activity">
    <reaction evidence="1">
        <text>dimethylallyl diphosphate + 2 oxidized [2Fe-2S]-[ferredoxin] + H2O = (2E)-4-hydroxy-3-methylbut-2-enyl diphosphate + 2 reduced [2Fe-2S]-[ferredoxin] + 2 H(+)</text>
        <dbReference type="Rhea" id="RHEA:24825"/>
        <dbReference type="Rhea" id="RHEA-COMP:10000"/>
        <dbReference type="Rhea" id="RHEA-COMP:10001"/>
        <dbReference type="ChEBI" id="CHEBI:15377"/>
        <dbReference type="ChEBI" id="CHEBI:15378"/>
        <dbReference type="ChEBI" id="CHEBI:33737"/>
        <dbReference type="ChEBI" id="CHEBI:33738"/>
        <dbReference type="ChEBI" id="CHEBI:57623"/>
        <dbReference type="ChEBI" id="CHEBI:128753"/>
        <dbReference type="EC" id="1.17.7.4"/>
    </reaction>
</comment>
<comment type="cofactor">
    <cofactor evidence="1">
        <name>[4Fe-4S] cluster</name>
        <dbReference type="ChEBI" id="CHEBI:49883"/>
    </cofactor>
    <text evidence="1">Binds 1 [4Fe-4S] cluster per subunit.</text>
</comment>
<comment type="pathway">
    <text evidence="1">Isoprenoid biosynthesis; dimethylallyl diphosphate biosynthesis; dimethylallyl diphosphate from (2E)-4-hydroxy-3-methylbutenyl diphosphate: step 1/1.</text>
</comment>
<comment type="pathway">
    <text evidence="1">Isoprenoid biosynthesis; isopentenyl diphosphate biosynthesis via DXP pathway; isopentenyl diphosphate from 1-deoxy-D-xylulose 5-phosphate: step 6/6.</text>
</comment>
<comment type="similarity">
    <text evidence="1">Belongs to the IspH family.</text>
</comment>
<dbReference type="EC" id="1.17.7.4" evidence="1"/>
<dbReference type="EMBL" id="AE008917">
    <property type="protein sequence ID" value="AAL52640.1"/>
    <property type="molecule type" value="Genomic_DNA"/>
</dbReference>
<dbReference type="PIR" id="AE3434">
    <property type="entry name" value="AE3434"/>
</dbReference>
<dbReference type="RefSeq" id="WP_004683139.1">
    <property type="nucleotide sequence ID" value="NZ_GG703778.1"/>
</dbReference>
<dbReference type="SMR" id="Q8YFR1"/>
<dbReference type="GeneID" id="29594309"/>
<dbReference type="KEGG" id="bme:BMEI1459"/>
<dbReference type="KEGG" id="bmel:DK63_2028"/>
<dbReference type="PATRIC" id="fig|224914.52.peg.2130"/>
<dbReference type="eggNOG" id="COG0761">
    <property type="taxonomic scope" value="Bacteria"/>
</dbReference>
<dbReference type="PhylomeDB" id="Q8YFR1"/>
<dbReference type="UniPathway" id="UPA00056">
    <property type="reaction ID" value="UER00097"/>
</dbReference>
<dbReference type="UniPathway" id="UPA00059">
    <property type="reaction ID" value="UER00105"/>
</dbReference>
<dbReference type="Proteomes" id="UP000000419">
    <property type="component" value="Chromosome I"/>
</dbReference>
<dbReference type="GO" id="GO:0051539">
    <property type="term" value="F:4 iron, 4 sulfur cluster binding"/>
    <property type="evidence" value="ECO:0007669"/>
    <property type="project" value="UniProtKB-UniRule"/>
</dbReference>
<dbReference type="GO" id="GO:0051745">
    <property type="term" value="F:4-hydroxy-3-methylbut-2-enyl diphosphate reductase activity"/>
    <property type="evidence" value="ECO:0007669"/>
    <property type="project" value="UniProtKB-UniRule"/>
</dbReference>
<dbReference type="GO" id="GO:0046872">
    <property type="term" value="F:metal ion binding"/>
    <property type="evidence" value="ECO:0007669"/>
    <property type="project" value="UniProtKB-KW"/>
</dbReference>
<dbReference type="GO" id="GO:0050992">
    <property type="term" value="P:dimethylallyl diphosphate biosynthetic process"/>
    <property type="evidence" value="ECO:0007669"/>
    <property type="project" value="UniProtKB-UniRule"/>
</dbReference>
<dbReference type="GO" id="GO:0019288">
    <property type="term" value="P:isopentenyl diphosphate biosynthetic process, methylerythritol 4-phosphate pathway"/>
    <property type="evidence" value="ECO:0007669"/>
    <property type="project" value="UniProtKB-UniRule"/>
</dbReference>
<dbReference type="GO" id="GO:0016114">
    <property type="term" value="P:terpenoid biosynthetic process"/>
    <property type="evidence" value="ECO:0007669"/>
    <property type="project" value="UniProtKB-UniRule"/>
</dbReference>
<dbReference type="CDD" id="cd13944">
    <property type="entry name" value="lytB_ispH"/>
    <property type="match status" value="1"/>
</dbReference>
<dbReference type="Gene3D" id="3.40.50.11270">
    <property type="match status" value="1"/>
</dbReference>
<dbReference type="Gene3D" id="3.40.1010.20">
    <property type="entry name" value="4-hydroxy-3-methylbut-2-enyl diphosphate reductase, catalytic domain"/>
    <property type="match status" value="2"/>
</dbReference>
<dbReference type="HAMAP" id="MF_00191">
    <property type="entry name" value="IspH"/>
    <property type="match status" value="1"/>
</dbReference>
<dbReference type="InterPro" id="IPR003451">
    <property type="entry name" value="LytB/IspH"/>
</dbReference>
<dbReference type="NCBIfam" id="TIGR00216">
    <property type="entry name" value="ispH_lytB"/>
    <property type="match status" value="1"/>
</dbReference>
<dbReference type="NCBIfam" id="NF002190">
    <property type="entry name" value="PRK01045.1-4"/>
    <property type="match status" value="1"/>
</dbReference>
<dbReference type="PANTHER" id="PTHR30426">
    <property type="entry name" value="4-HYDROXY-3-METHYLBUT-2-ENYL DIPHOSPHATE REDUCTASE"/>
    <property type="match status" value="1"/>
</dbReference>
<dbReference type="PANTHER" id="PTHR30426:SF0">
    <property type="entry name" value="4-HYDROXY-3-METHYLBUT-2-ENYL DIPHOSPHATE REDUCTASE"/>
    <property type="match status" value="1"/>
</dbReference>
<dbReference type="Pfam" id="PF02401">
    <property type="entry name" value="LYTB"/>
    <property type="match status" value="1"/>
</dbReference>
<feature type="chain" id="PRO_0000128787" description="4-hydroxy-3-methylbut-2-enyl diphosphate reductase">
    <location>
        <begin position="1"/>
        <end position="346"/>
    </location>
</feature>
<feature type="active site" description="Proton donor" evidence="1">
    <location>
        <position position="136"/>
    </location>
</feature>
<feature type="binding site" evidence="1">
    <location>
        <position position="19"/>
    </location>
    <ligand>
        <name>[4Fe-4S] cluster</name>
        <dbReference type="ChEBI" id="CHEBI:49883"/>
    </ligand>
</feature>
<feature type="binding site" evidence="1">
    <location>
        <position position="48"/>
    </location>
    <ligand>
        <name>(2E)-4-hydroxy-3-methylbut-2-enyl diphosphate</name>
        <dbReference type="ChEBI" id="CHEBI:128753"/>
    </ligand>
</feature>
<feature type="binding site" evidence="1">
    <location>
        <position position="48"/>
    </location>
    <ligand>
        <name>dimethylallyl diphosphate</name>
        <dbReference type="ChEBI" id="CHEBI:57623"/>
    </ligand>
</feature>
<feature type="binding site" evidence="1">
    <location>
        <position position="48"/>
    </location>
    <ligand>
        <name>isopentenyl diphosphate</name>
        <dbReference type="ChEBI" id="CHEBI:128769"/>
    </ligand>
</feature>
<feature type="binding site" evidence="1">
    <location>
        <position position="84"/>
    </location>
    <ligand>
        <name>(2E)-4-hydroxy-3-methylbut-2-enyl diphosphate</name>
        <dbReference type="ChEBI" id="CHEBI:128753"/>
    </ligand>
</feature>
<feature type="binding site" evidence="1">
    <location>
        <position position="84"/>
    </location>
    <ligand>
        <name>dimethylallyl diphosphate</name>
        <dbReference type="ChEBI" id="CHEBI:57623"/>
    </ligand>
</feature>
<feature type="binding site" evidence="1">
    <location>
        <position position="84"/>
    </location>
    <ligand>
        <name>isopentenyl diphosphate</name>
        <dbReference type="ChEBI" id="CHEBI:128769"/>
    </ligand>
</feature>
<feature type="binding site" evidence="1">
    <location>
        <position position="106"/>
    </location>
    <ligand>
        <name>[4Fe-4S] cluster</name>
        <dbReference type="ChEBI" id="CHEBI:49883"/>
    </ligand>
</feature>
<feature type="binding site" evidence="1">
    <location>
        <position position="134"/>
    </location>
    <ligand>
        <name>(2E)-4-hydroxy-3-methylbut-2-enyl diphosphate</name>
        <dbReference type="ChEBI" id="CHEBI:128753"/>
    </ligand>
</feature>
<feature type="binding site" evidence="1">
    <location>
        <position position="134"/>
    </location>
    <ligand>
        <name>dimethylallyl diphosphate</name>
        <dbReference type="ChEBI" id="CHEBI:57623"/>
    </ligand>
</feature>
<feature type="binding site" evidence="1">
    <location>
        <position position="134"/>
    </location>
    <ligand>
        <name>isopentenyl diphosphate</name>
        <dbReference type="ChEBI" id="CHEBI:128769"/>
    </ligand>
</feature>
<feature type="binding site" evidence="1">
    <location>
        <position position="175"/>
    </location>
    <ligand>
        <name>(2E)-4-hydroxy-3-methylbut-2-enyl diphosphate</name>
        <dbReference type="ChEBI" id="CHEBI:128753"/>
    </ligand>
</feature>
<feature type="binding site" evidence="1">
    <location>
        <position position="205"/>
    </location>
    <ligand>
        <name>[4Fe-4S] cluster</name>
        <dbReference type="ChEBI" id="CHEBI:49883"/>
    </ligand>
</feature>
<feature type="binding site" evidence="1">
    <location>
        <position position="233"/>
    </location>
    <ligand>
        <name>(2E)-4-hydroxy-3-methylbut-2-enyl diphosphate</name>
        <dbReference type="ChEBI" id="CHEBI:128753"/>
    </ligand>
</feature>
<feature type="binding site" evidence="1">
    <location>
        <position position="233"/>
    </location>
    <ligand>
        <name>dimethylallyl diphosphate</name>
        <dbReference type="ChEBI" id="CHEBI:57623"/>
    </ligand>
</feature>
<feature type="binding site" evidence="1">
    <location>
        <position position="233"/>
    </location>
    <ligand>
        <name>isopentenyl diphosphate</name>
        <dbReference type="ChEBI" id="CHEBI:128769"/>
    </ligand>
</feature>
<feature type="binding site" evidence="1">
    <location>
        <position position="234"/>
    </location>
    <ligand>
        <name>(2E)-4-hydroxy-3-methylbut-2-enyl diphosphate</name>
        <dbReference type="ChEBI" id="CHEBI:128753"/>
    </ligand>
</feature>
<feature type="binding site" evidence="1">
    <location>
        <position position="234"/>
    </location>
    <ligand>
        <name>dimethylallyl diphosphate</name>
        <dbReference type="ChEBI" id="CHEBI:57623"/>
    </ligand>
</feature>
<feature type="binding site" evidence="1">
    <location>
        <position position="234"/>
    </location>
    <ligand>
        <name>isopentenyl diphosphate</name>
        <dbReference type="ChEBI" id="CHEBI:128769"/>
    </ligand>
</feature>
<feature type="binding site" evidence="1">
    <location>
        <position position="235"/>
    </location>
    <ligand>
        <name>(2E)-4-hydroxy-3-methylbut-2-enyl diphosphate</name>
        <dbReference type="ChEBI" id="CHEBI:128753"/>
    </ligand>
</feature>
<feature type="binding site" evidence="1">
    <location>
        <position position="235"/>
    </location>
    <ligand>
        <name>dimethylallyl diphosphate</name>
        <dbReference type="ChEBI" id="CHEBI:57623"/>
    </ligand>
</feature>
<feature type="binding site" evidence="1">
    <location>
        <position position="235"/>
    </location>
    <ligand>
        <name>isopentenyl diphosphate</name>
        <dbReference type="ChEBI" id="CHEBI:128769"/>
    </ligand>
</feature>
<feature type="binding site" evidence="1">
    <location>
        <position position="278"/>
    </location>
    <ligand>
        <name>(2E)-4-hydroxy-3-methylbut-2-enyl diphosphate</name>
        <dbReference type="ChEBI" id="CHEBI:128753"/>
    </ligand>
</feature>
<feature type="binding site" evidence="1">
    <location>
        <position position="278"/>
    </location>
    <ligand>
        <name>dimethylallyl diphosphate</name>
        <dbReference type="ChEBI" id="CHEBI:57623"/>
    </ligand>
</feature>
<feature type="binding site" evidence="1">
    <location>
        <position position="278"/>
    </location>
    <ligand>
        <name>isopentenyl diphosphate</name>
        <dbReference type="ChEBI" id="CHEBI:128769"/>
    </ligand>
</feature>
<organism>
    <name type="scientific">Brucella melitensis biotype 1 (strain ATCC 23456 / CCUG 17765 / NCTC 10094 / 16M)</name>
    <dbReference type="NCBI Taxonomy" id="224914"/>
    <lineage>
        <taxon>Bacteria</taxon>
        <taxon>Pseudomonadati</taxon>
        <taxon>Pseudomonadota</taxon>
        <taxon>Alphaproteobacteria</taxon>
        <taxon>Hyphomicrobiales</taxon>
        <taxon>Brucellaceae</taxon>
        <taxon>Brucella/Ochrobactrum group</taxon>
        <taxon>Brucella</taxon>
    </lineage>
</organism>
<protein>
    <recommendedName>
        <fullName evidence="1">4-hydroxy-3-methylbut-2-enyl diphosphate reductase</fullName>
        <shortName evidence="1">HMBPP reductase</shortName>
        <ecNumber evidence="1">1.17.7.4</ecNumber>
    </recommendedName>
</protein>
<keyword id="KW-0004">4Fe-4S</keyword>
<keyword id="KW-0408">Iron</keyword>
<keyword id="KW-0411">Iron-sulfur</keyword>
<keyword id="KW-0414">Isoprene biosynthesis</keyword>
<keyword id="KW-0479">Metal-binding</keyword>
<keyword id="KW-0560">Oxidoreductase</keyword>
<name>ISPH_BRUME</name>
<gene>
    <name evidence="1" type="primary">ispH</name>
    <name type="synonym">lytB</name>
    <name type="ordered locus">BMEI1459</name>
</gene>
<reference key="1">
    <citation type="journal article" date="2002" name="Proc. Natl. Acad. Sci. U.S.A.">
        <title>The genome sequence of the facultative intracellular pathogen Brucella melitensis.</title>
        <authorList>
            <person name="DelVecchio V.G."/>
            <person name="Kapatral V."/>
            <person name="Redkar R.J."/>
            <person name="Patra G."/>
            <person name="Mujer C."/>
            <person name="Los T."/>
            <person name="Ivanova N."/>
            <person name="Anderson I."/>
            <person name="Bhattacharyya A."/>
            <person name="Lykidis A."/>
            <person name="Reznik G."/>
            <person name="Jablonski L."/>
            <person name="Larsen N."/>
            <person name="D'Souza M."/>
            <person name="Bernal A."/>
            <person name="Mazur M."/>
            <person name="Goltsman E."/>
            <person name="Selkov E."/>
            <person name="Elzer P.H."/>
            <person name="Hagius S."/>
            <person name="O'Callaghan D."/>
            <person name="Letesson J.-J."/>
            <person name="Haselkorn R."/>
            <person name="Kyrpides N.C."/>
            <person name="Overbeek R."/>
        </authorList>
    </citation>
    <scope>NUCLEOTIDE SEQUENCE [LARGE SCALE GENOMIC DNA]</scope>
    <source>
        <strain>ATCC 23456 / CCUG 17765 / NCTC 10094 / 16M</strain>
    </source>
</reference>